<feature type="chain" id="PRO_1000066836" description="Alkanesulfonate monooxygenase">
    <location>
        <begin position="1"/>
        <end position="381"/>
    </location>
</feature>
<proteinExistence type="inferred from homology"/>
<dbReference type="EC" id="1.14.14.5" evidence="1"/>
<dbReference type="EMBL" id="CP000266">
    <property type="protein sequence ID" value="ABF03161.1"/>
    <property type="molecule type" value="Genomic_DNA"/>
</dbReference>
<dbReference type="RefSeq" id="WP_000056001.1">
    <property type="nucleotide sequence ID" value="NC_008258.1"/>
</dbReference>
<dbReference type="SMR" id="Q0T6A4"/>
<dbReference type="KEGG" id="sfv:SFV_0939"/>
<dbReference type="HOGENOM" id="CLU_027853_1_0_6"/>
<dbReference type="Proteomes" id="UP000000659">
    <property type="component" value="Chromosome"/>
</dbReference>
<dbReference type="GO" id="GO:0008726">
    <property type="term" value="F:alkanesulfonate monooxygenase activity"/>
    <property type="evidence" value="ECO:0007669"/>
    <property type="project" value="UniProtKB-UniRule"/>
</dbReference>
<dbReference type="GO" id="GO:0046306">
    <property type="term" value="P:alkanesulfonate catabolic process"/>
    <property type="evidence" value="ECO:0007669"/>
    <property type="project" value="TreeGrafter"/>
</dbReference>
<dbReference type="CDD" id="cd01094">
    <property type="entry name" value="Alkanesulfonate_monoxygenase"/>
    <property type="match status" value="1"/>
</dbReference>
<dbReference type="FunFam" id="3.20.20.30:FF:000001">
    <property type="entry name" value="Alkanesulfonate monooxygenase"/>
    <property type="match status" value="1"/>
</dbReference>
<dbReference type="Gene3D" id="3.20.20.30">
    <property type="entry name" value="Luciferase-like domain"/>
    <property type="match status" value="1"/>
</dbReference>
<dbReference type="HAMAP" id="MF_01229">
    <property type="entry name" value="Alkanesulf_monooxygen"/>
    <property type="match status" value="1"/>
</dbReference>
<dbReference type="InterPro" id="IPR019911">
    <property type="entry name" value="Alkanesulphonate_mOase_FMN-dep"/>
</dbReference>
<dbReference type="InterPro" id="IPR011251">
    <property type="entry name" value="Luciferase-like_dom"/>
</dbReference>
<dbReference type="InterPro" id="IPR036661">
    <property type="entry name" value="Luciferase-like_sf"/>
</dbReference>
<dbReference type="InterPro" id="IPR050172">
    <property type="entry name" value="SsuD_RutA_monooxygenase"/>
</dbReference>
<dbReference type="NCBIfam" id="TIGR03565">
    <property type="entry name" value="alk_sulf_monoox"/>
    <property type="match status" value="1"/>
</dbReference>
<dbReference type="NCBIfam" id="NF001939">
    <property type="entry name" value="PRK00719.1"/>
    <property type="match status" value="1"/>
</dbReference>
<dbReference type="PANTHER" id="PTHR42847">
    <property type="entry name" value="ALKANESULFONATE MONOOXYGENASE"/>
    <property type="match status" value="1"/>
</dbReference>
<dbReference type="PANTHER" id="PTHR42847:SF4">
    <property type="entry name" value="ALKANESULFONATE MONOOXYGENASE-RELATED"/>
    <property type="match status" value="1"/>
</dbReference>
<dbReference type="Pfam" id="PF00296">
    <property type="entry name" value="Bac_luciferase"/>
    <property type="match status" value="1"/>
</dbReference>
<dbReference type="SUPFAM" id="SSF51679">
    <property type="entry name" value="Bacterial luciferase-like"/>
    <property type="match status" value="1"/>
</dbReference>
<accession>Q0T6A4</accession>
<comment type="function">
    <text evidence="1">Catalyzes the desulfonation of aliphatic sulfonates.</text>
</comment>
<comment type="catalytic activity">
    <reaction evidence="1">
        <text>an alkanesulfonate + FMNH2 + O2 = an aldehyde + FMN + sulfite + H2O + 2 H(+)</text>
        <dbReference type="Rhea" id="RHEA:23064"/>
        <dbReference type="ChEBI" id="CHEBI:15377"/>
        <dbReference type="ChEBI" id="CHEBI:15378"/>
        <dbReference type="ChEBI" id="CHEBI:15379"/>
        <dbReference type="ChEBI" id="CHEBI:17359"/>
        <dbReference type="ChEBI" id="CHEBI:17478"/>
        <dbReference type="ChEBI" id="CHEBI:57618"/>
        <dbReference type="ChEBI" id="CHEBI:58210"/>
        <dbReference type="ChEBI" id="CHEBI:134249"/>
        <dbReference type="EC" id="1.14.14.5"/>
    </reaction>
</comment>
<comment type="subunit">
    <text evidence="1">Homotetramer.</text>
</comment>
<comment type="miscellaneous">
    <text evidence="1">FMNH(2) which is absolutely required for this enzymatic reaction, is provided by SsuE.</text>
</comment>
<comment type="similarity">
    <text evidence="1">Belongs to the SsuD family.</text>
</comment>
<protein>
    <recommendedName>
        <fullName evidence="1">Alkanesulfonate monooxygenase</fullName>
        <ecNumber evidence="1">1.14.14.5</ecNumber>
    </recommendedName>
    <alternativeName>
        <fullName evidence="1">FMNH2-dependent aliphatic sulfonate monooxygenase</fullName>
    </alternativeName>
</protein>
<keyword id="KW-0285">Flavoprotein</keyword>
<keyword id="KW-0288">FMN</keyword>
<keyword id="KW-0503">Monooxygenase</keyword>
<keyword id="KW-0560">Oxidoreductase</keyword>
<reference key="1">
    <citation type="journal article" date="2006" name="BMC Genomics">
        <title>Complete genome sequence of Shigella flexneri 5b and comparison with Shigella flexneri 2a.</title>
        <authorList>
            <person name="Nie H."/>
            <person name="Yang F."/>
            <person name="Zhang X."/>
            <person name="Yang J."/>
            <person name="Chen L."/>
            <person name="Wang J."/>
            <person name="Xiong Z."/>
            <person name="Peng J."/>
            <person name="Sun L."/>
            <person name="Dong J."/>
            <person name="Xue Y."/>
            <person name="Xu X."/>
            <person name="Chen S."/>
            <person name="Yao Z."/>
            <person name="Shen Y."/>
            <person name="Jin Q."/>
        </authorList>
    </citation>
    <scope>NUCLEOTIDE SEQUENCE [LARGE SCALE GENOMIC DNA]</scope>
    <source>
        <strain>8401</strain>
    </source>
</reference>
<sequence>MSLNMFWFLPTHGDGHYLGTEEGSRPVDHGYLQQIAQAADRLGYTGVLIPTGRSCEDAWLVAASMIPVTQRLKFLVALRPSVTSPTVAARQAATLDRLSNGRALFNLVTGSDPQELAGDGVFLDHSERYEASAEFTQVWRRLLLGETVNFNGKHSHVRGAKLLFPPIQQPYPPLYFGGSSDVAQELAAEQVDLYLTWGEPPELVKEKIEQVRAKAAAYGRKIRFGIRLHVIVRETNDEAWQAAERLISHLDDETIAKAQAAFARTDSVGQQRMAALHNGKRDNLEISPNLWAGVGLVRGGAGTALVGDGPTVAARINEYAALGIDSFVLSGYPHLEEAYRVGELLFPHLDVAIPEIPQPQPLNPQGEAVANDFIPRKVAQS</sequence>
<name>SSUD_SHIF8</name>
<evidence type="ECO:0000255" key="1">
    <source>
        <dbReference type="HAMAP-Rule" id="MF_01229"/>
    </source>
</evidence>
<organism>
    <name type="scientific">Shigella flexneri serotype 5b (strain 8401)</name>
    <dbReference type="NCBI Taxonomy" id="373384"/>
    <lineage>
        <taxon>Bacteria</taxon>
        <taxon>Pseudomonadati</taxon>
        <taxon>Pseudomonadota</taxon>
        <taxon>Gammaproteobacteria</taxon>
        <taxon>Enterobacterales</taxon>
        <taxon>Enterobacteriaceae</taxon>
        <taxon>Shigella</taxon>
    </lineage>
</organism>
<gene>
    <name evidence="1" type="primary">ssuD</name>
    <name type="ordered locus">SFV_0939</name>
</gene>